<accession>P0A2V4</accession>
<accession>P50981</accession>
<accession>Q07734</accession>
<reference key="1">
    <citation type="journal article" date="1993" name="J. Bacteriol.">
        <title>Genetic and biochemical characterization of the oligopeptide transport system of Lactococcus lactis.</title>
        <authorList>
            <person name="Tynkkynen S."/>
            <person name="Buist G."/>
            <person name="Kunji E."/>
            <person name="Kok J."/>
            <person name="Poolman B."/>
            <person name="Venema G."/>
            <person name="Haandrikman A."/>
        </authorList>
    </citation>
    <scope>NUCLEOTIDE SEQUENCE [GENOMIC DNA]</scope>
    <scope>FUNCTION</scope>
    <scope>SUBUNIT</scope>
    <source>
        <strain>SSL135</strain>
    </source>
</reference>
<reference key="2">
    <citation type="journal article" date="2001" name="Genome Res.">
        <title>The complete genome sequence of the lactic acid bacterium Lactococcus lactis ssp. lactis IL1403.</title>
        <authorList>
            <person name="Bolotin A."/>
            <person name="Wincker P."/>
            <person name="Mauger S."/>
            <person name="Jaillon O."/>
            <person name="Malarme K."/>
            <person name="Weissenbach J."/>
            <person name="Ehrlich S.D."/>
            <person name="Sorokin A."/>
        </authorList>
    </citation>
    <scope>NUCLEOTIDE SEQUENCE [LARGE SCALE GENOMIC DNA]</scope>
    <source>
        <strain>IL1403</strain>
    </source>
</reference>
<dbReference type="EC" id="7.4.2.6" evidence="5"/>
<dbReference type="EMBL" id="L18760">
    <property type="protein sequence ID" value="AAA16164.1"/>
    <property type="molecule type" value="Unassigned_DNA"/>
</dbReference>
<dbReference type="EMBL" id="AE005176">
    <property type="protein sequence ID" value="AAK05938.1"/>
    <property type="molecule type" value="Genomic_DNA"/>
</dbReference>
<dbReference type="PIR" id="B53290">
    <property type="entry name" value="B53290"/>
</dbReference>
<dbReference type="RefSeq" id="NP_267997.1">
    <property type="nucleotide sequence ID" value="NC_002662.1"/>
</dbReference>
<dbReference type="RefSeq" id="WP_010906164.1">
    <property type="nucleotide sequence ID" value="NC_002662.1"/>
</dbReference>
<dbReference type="RefSeq" id="YP_005863099.1">
    <property type="nucleotide sequence ID" value="NC_017478.1"/>
</dbReference>
<dbReference type="SMR" id="P0A2V4"/>
<dbReference type="TCDB" id="3.A.1.5.10">
    <property type="family name" value="the atp-binding cassette (abc) superfamily"/>
</dbReference>
<dbReference type="PaxDb" id="272623-L92192"/>
<dbReference type="EnsemblBacteria" id="AAK05938">
    <property type="protein sequence ID" value="AAK05938"/>
    <property type="gene ID" value="L92192"/>
</dbReference>
<dbReference type="KEGG" id="lla:L92192"/>
<dbReference type="PATRIC" id="fig|272623.7.peg.1971"/>
<dbReference type="eggNOG" id="COG4608">
    <property type="taxonomic scope" value="Bacteria"/>
</dbReference>
<dbReference type="HOGENOM" id="CLU_000604_1_23_9"/>
<dbReference type="OrthoDB" id="9802264at2"/>
<dbReference type="PRO" id="PR:P0A2V4"/>
<dbReference type="Proteomes" id="UP000002196">
    <property type="component" value="Chromosome"/>
</dbReference>
<dbReference type="GO" id="GO:0005886">
    <property type="term" value="C:plasma membrane"/>
    <property type="evidence" value="ECO:0007669"/>
    <property type="project" value="UniProtKB-SubCell"/>
</dbReference>
<dbReference type="GO" id="GO:0005524">
    <property type="term" value="F:ATP binding"/>
    <property type="evidence" value="ECO:0007669"/>
    <property type="project" value="UniProtKB-KW"/>
</dbReference>
<dbReference type="GO" id="GO:0016887">
    <property type="term" value="F:ATP hydrolysis activity"/>
    <property type="evidence" value="ECO:0007669"/>
    <property type="project" value="InterPro"/>
</dbReference>
<dbReference type="GO" id="GO:0015833">
    <property type="term" value="P:peptide transport"/>
    <property type="evidence" value="ECO:0007669"/>
    <property type="project" value="UniProtKB-KW"/>
</dbReference>
<dbReference type="GO" id="GO:0015031">
    <property type="term" value="P:protein transport"/>
    <property type="evidence" value="ECO:0007669"/>
    <property type="project" value="UniProtKB-KW"/>
</dbReference>
<dbReference type="GO" id="GO:0055085">
    <property type="term" value="P:transmembrane transport"/>
    <property type="evidence" value="ECO:0007669"/>
    <property type="project" value="UniProtKB-ARBA"/>
</dbReference>
<dbReference type="CDD" id="cd03257">
    <property type="entry name" value="ABC_NikE_OppD_transporters"/>
    <property type="match status" value="1"/>
</dbReference>
<dbReference type="FunFam" id="3.40.50.300:FF:000016">
    <property type="entry name" value="Oligopeptide ABC transporter ATP-binding component"/>
    <property type="match status" value="1"/>
</dbReference>
<dbReference type="Gene3D" id="3.40.50.300">
    <property type="entry name" value="P-loop containing nucleotide triphosphate hydrolases"/>
    <property type="match status" value="1"/>
</dbReference>
<dbReference type="InterPro" id="IPR003593">
    <property type="entry name" value="AAA+_ATPase"/>
</dbReference>
<dbReference type="InterPro" id="IPR050319">
    <property type="entry name" value="ABC_transp_ATP-bind"/>
</dbReference>
<dbReference type="InterPro" id="IPR003439">
    <property type="entry name" value="ABC_transporter-like_ATP-bd"/>
</dbReference>
<dbReference type="InterPro" id="IPR017871">
    <property type="entry name" value="ABC_transporter-like_CS"/>
</dbReference>
<dbReference type="InterPro" id="IPR013563">
    <property type="entry name" value="Oligopep_ABC_C"/>
</dbReference>
<dbReference type="InterPro" id="IPR027417">
    <property type="entry name" value="P-loop_NTPase"/>
</dbReference>
<dbReference type="PANTHER" id="PTHR43776">
    <property type="entry name" value="TRANSPORT ATP-BINDING PROTEIN"/>
    <property type="match status" value="1"/>
</dbReference>
<dbReference type="Pfam" id="PF00005">
    <property type="entry name" value="ABC_tran"/>
    <property type="match status" value="1"/>
</dbReference>
<dbReference type="Pfam" id="PF08352">
    <property type="entry name" value="oligo_HPY"/>
    <property type="match status" value="1"/>
</dbReference>
<dbReference type="SMART" id="SM00382">
    <property type="entry name" value="AAA"/>
    <property type="match status" value="1"/>
</dbReference>
<dbReference type="SUPFAM" id="SSF52540">
    <property type="entry name" value="P-loop containing nucleoside triphosphate hydrolases"/>
    <property type="match status" value="1"/>
</dbReference>
<dbReference type="PROSITE" id="PS00211">
    <property type="entry name" value="ABC_TRANSPORTER_1"/>
    <property type="match status" value="1"/>
</dbReference>
<dbReference type="PROSITE" id="PS50893">
    <property type="entry name" value="ABC_TRANSPORTER_2"/>
    <property type="match status" value="1"/>
</dbReference>
<evidence type="ECO:0000250" key="1">
    <source>
        <dbReference type="UniProtKB" id="P24137"/>
    </source>
</evidence>
<evidence type="ECO:0000255" key="2">
    <source>
        <dbReference type="PROSITE-ProRule" id="PRU00434"/>
    </source>
</evidence>
<evidence type="ECO:0000269" key="3">
    <source>
    </source>
</evidence>
<evidence type="ECO:0000305" key="4"/>
<evidence type="ECO:0000305" key="5">
    <source>
    </source>
</evidence>
<feature type="chain" id="PRO_0000092662" description="Oligopeptide transport ATP-binding protein OppF">
    <location>
        <begin position="1"/>
        <end position="319"/>
    </location>
</feature>
<feature type="domain" description="ABC transporter" evidence="2">
    <location>
        <begin position="5"/>
        <end position="255"/>
    </location>
</feature>
<feature type="binding site" evidence="2">
    <location>
        <begin position="48"/>
        <end position="55"/>
    </location>
    <ligand>
        <name>ATP</name>
        <dbReference type="ChEBI" id="CHEBI:30616"/>
    </ligand>
</feature>
<comment type="function">
    <text evidence="3 4">Part of the ABC transporter complex OppABCDF involved in the uptake of oligopeptides (PubMed:8244921). Probably responsible for energy coupling to the transport system (Probable). Essential for uptake of peptides larger than three amino acids and for growth in milk (PubMed:8244921).</text>
</comment>
<comment type="catalytic activity">
    <reaction evidence="5">
        <text>a [peptide](out) + ATP + H2O = a [peptide](in) + ADP + phosphate + H(+)</text>
        <dbReference type="Rhea" id="RHEA:78459"/>
        <dbReference type="Rhea" id="RHEA-COMP:19083"/>
        <dbReference type="ChEBI" id="CHEBI:15377"/>
        <dbReference type="ChEBI" id="CHEBI:15378"/>
        <dbReference type="ChEBI" id="CHEBI:30616"/>
        <dbReference type="ChEBI" id="CHEBI:33710"/>
        <dbReference type="ChEBI" id="CHEBI:43474"/>
        <dbReference type="ChEBI" id="CHEBI:456216"/>
        <dbReference type="EC" id="7.4.2.6"/>
    </reaction>
    <physiologicalReaction direction="left-to-right" evidence="5">
        <dbReference type="Rhea" id="RHEA:78460"/>
    </physiologicalReaction>
</comment>
<comment type="subunit">
    <text evidence="5">The complex is composed of two ATP-binding proteins (OppD and OppF), two transmembrane proteins (OppB and OppC) and a solute-binding protein (OppA).</text>
</comment>
<comment type="subcellular location">
    <subcellularLocation>
        <location evidence="1">Cell membrane</location>
        <topology evidence="1">Peripheral membrane protein</topology>
    </subcellularLocation>
</comment>
<comment type="similarity">
    <text evidence="4">Belongs to the ABC transporter superfamily.</text>
</comment>
<keyword id="KW-0067">ATP-binding</keyword>
<keyword id="KW-1003">Cell membrane</keyword>
<keyword id="KW-0472">Membrane</keyword>
<keyword id="KW-0547">Nucleotide-binding</keyword>
<keyword id="KW-0571">Peptide transport</keyword>
<keyword id="KW-0653">Protein transport</keyword>
<keyword id="KW-1185">Reference proteome</keyword>
<keyword id="KW-1278">Translocase</keyword>
<keyword id="KW-0813">Transport</keyword>
<proteinExistence type="evidence at protein level"/>
<protein>
    <recommendedName>
        <fullName evidence="4">Oligopeptide transport ATP-binding protein OppF</fullName>
        <ecNumber evidence="5">7.4.2.6</ecNumber>
    </recommendedName>
</protein>
<gene>
    <name type="primary">oppF</name>
    <name type="ordered locus">LL1840</name>
    <name type="ORF">L92192</name>
</gene>
<organism>
    <name type="scientific">Lactococcus lactis subsp. lactis (strain IL1403)</name>
    <name type="common">Streptococcus lactis</name>
    <dbReference type="NCBI Taxonomy" id="272623"/>
    <lineage>
        <taxon>Bacteria</taxon>
        <taxon>Bacillati</taxon>
        <taxon>Bacillota</taxon>
        <taxon>Bacilli</taxon>
        <taxon>Lactobacillales</taxon>
        <taxon>Streptococcaceae</taxon>
        <taxon>Lactococcus</taxon>
    </lineage>
</organism>
<sequence length="319" mass="35976">MSEILNLKDLKVYYPIRSGFFNRVTDNVLAVDGVDLTIHEGETVGLVGESGSGKSTIGKTIVGLEQMTSGQLIYKGQDVSKKKIRNQLKYNKDVQMIFQDAFSSLNPRKTIYDIIAEPIRNFEKIDANTENKRIHELLDIVGLPKQALEQYPFQFSGGQQQRIGIARAVATNPKLIVADEPVSALDLSVQAQVLNFMKLIQKDLGIAFLFISHDLGVVRHMTDNIAVMHNGRIVEKGTRRDIFDEPQHIYTKRLLSAIPSIDVTRRAENRKNRLKVEQDFEDKKANFYDKDGHALPLKKLSESHWAALPKGGENVESNY</sequence>
<name>OPPF_LACLA</name>